<keyword id="KW-0028">Amino-acid biosynthesis</keyword>
<keyword id="KW-0057">Aromatic amino acid biosynthesis</keyword>
<keyword id="KW-0274">FAD</keyword>
<keyword id="KW-0285">Flavoprotein</keyword>
<keyword id="KW-0288">FMN</keyword>
<keyword id="KW-0456">Lyase</keyword>
<keyword id="KW-0521">NADP</keyword>
<gene>
    <name evidence="1" type="primary">aroC</name>
    <name type="ordered locus">Dvul_2090</name>
</gene>
<sequence length="354" mass="37199">MSGNTLGRLFRLTTYGESHGAGLGGVIDGCPAGIALDEAVIQRELDLRRPGGNSASTTRQEPDRVRLLSGVFEGVTTGTPIAFHVENVDQRSRDYGEIARLYRPGHADFTYDAKFGVRDYRGGGRASGRETLSRVAGGAIAQALLARHGIAVRAFTVELGGVPADLVDVAGAQLRPFFSPDPDVVEAWEDMVRTVKGEGDTLGGIVQVEATGVPAGLGEPVFDKLDAVLAYALMSVGAVKGVEVGAGFEAARMHGSDNNDPIVPSGFFTNHAGGILGGISNGETIVLRAAVKPIPSIAQEQITIDRDGKPSALFIAGRHDISAIPRIVPVLKAMTALVLADMLLMQRRMATPQP</sequence>
<name>AROC_NITV4</name>
<reference key="1">
    <citation type="journal article" date="2009" name="Environ. Microbiol.">
        <title>Contribution of mobile genetic elements to Desulfovibrio vulgaris genome plasticity.</title>
        <authorList>
            <person name="Walker C.B."/>
            <person name="Stolyar S."/>
            <person name="Chivian D."/>
            <person name="Pinel N."/>
            <person name="Gabster J.A."/>
            <person name="Dehal P.S."/>
            <person name="He Z."/>
            <person name="Yang Z.K."/>
            <person name="Yen H.C."/>
            <person name="Zhou J."/>
            <person name="Wall J.D."/>
            <person name="Hazen T.C."/>
            <person name="Arkin A.P."/>
            <person name="Stahl D.A."/>
        </authorList>
    </citation>
    <scope>NUCLEOTIDE SEQUENCE [LARGE SCALE GENOMIC DNA]</scope>
    <source>
        <strain>DP4</strain>
    </source>
</reference>
<protein>
    <recommendedName>
        <fullName evidence="1">Chorismate synthase</fullName>
        <shortName evidence="1">CS</shortName>
        <ecNumber evidence="1">4.2.3.5</ecNumber>
    </recommendedName>
    <alternativeName>
        <fullName evidence="1">5-enolpyruvylshikimate-3-phosphate phospholyase</fullName>
    </alternativeName>
</protein>
<feature type="chain" id="PRO_0000322400" description="Chorismate synthase">
    <location>
        <begin position="1"/>
        <end position="354"/>
    </location>
</feature>
<feature type="binding site" evidence="1">
    <location>
        <position position="48"/>
    </location>
    <ligand>
        <name>NADP(+)</name>
        <dbReference type="ChEBI" id="CHEBI:58349"/>
    </ligand>
</feature>
<feature type="binding site" evidence="1">
    <location>
        <begin position="125"/>
        <end position="127"/>
    </location>
    <ligand>
        <name>FMN</name>
        <dbReference type="ChEBI" id="CHEBI:58210"/>
    </ligand>
</feature>
<feature type="binding site" evidence="1">
    <location>
        <position position="277"/>
    </location>
    <ligand>
        <name>FMN</name>
        <dbReference type="ChEBI" id="CHEBI:58210"/>
    </ligand>
</feature>
<feature type="binding site" evidence="1">
    <location>
        <begin position="292"/>
        <end position="296"/>
    </location>
    <ligand>
        <name>FMN</name>
        <dbReference type="ChEBI" id="CHEBI:58210"/>
    </ligand>
</feature>
<feature type="binding site" evidence="1">
    <location>
        <position position="318"/>
    </location>
    <ligand>
        <name>FMN</name>
        <dbReference type="ChEBI" id="CHEBI:58210"/>
    </ligand>
</feature>
<accession>A1VF90</accession>
<comment type="function">
    <text evidence="1">Catalyzes the anti-1,4-elimination of the C-3 phosphate and the C-6 proR hydrogen from 5-enolpyruvylshikimate-3-phosphate (EPSP) to yield chorismate, which is the branch point compound that serves as the starting substrate for the three terminal pathways of aromatic amino acid biosynthesis. This reaction introduces a second double bond into the aromatic ring system.</text>
</comment>
<comment type="catalytic activity">
    <reaction evidence="1">
        <text>5-O-(1-carboxyvinyl)-3-phosphoshikimate = chorismate + phosphate</text>
        <dbReference type="Rhea" id="RHEA:21020"/>
        <dbReference type="ChEBI" id="CHEBI:29748"/>
        <dbReference type="ChEBI" id="CHEBI:43474"/>
        <dbReference type="ChEBI" id="CHEBI:57701"/>
        <dbReference type="EC" id="4.2.3.5"/>
    </reaction>
</comment>
<comment type="cofactor">
    <cofactor evidence="1">
        <name>FMNH2</name>
        <dbReference type="ChEBI" id="CHEBI:57618"/>
    </cofactor>
    <text evidence="1">Reduced FMN (FMNH(2)).</text>
</comment>
<comment type="pathway">
    <text evidence="1">Metabolic intermediate biosynthesis; chorismate biosynthesis; chorismate from D-erythrose 4-phosphate and phosphoenolpyruvate: step 7/7.</text>
</comment>
<comment type="subunit">
    <text evidence="1">Homotetramer.</text>
</comment>
<comment type="similarity">
    <text evidence="1">Belongs to the chorismate synthase family.</text>
</comment>
<proteinExistence type="inferred from homology"/>
<evidence type="ECO:0000255" key="1">
    <source>
        <dbReference type="HAMAP-Rule" id="MF_00300"/>
    </source>
</evidence>
<dbReference type="EC" id="4.2.3.5" evidence="1"/>
<dbReference type="EMBL" id="CP000527">
    <property type="protein sequence ID" value="ABM29106.1"/>
    <property type="molecule type" value="Genomic_DNA"/>
</dbReference>
<dbReference type="RefSeq" id="WP_011792647.1">
    <property type="nucleotide sequence ID" value="NC_008751.1"/>
</dbReference>
<dbReference type="SMR" id="A1VF90"/>
<dbReference type="KEGG" id="dvl:Dvul_2090"/>
<dbReference type="HOGENOM" id="CLU_034547_0_0_7"/>
<dbReference type="UniPathway" id="UPA00053">
    <property type="reaction ID" value="UER00090"/>
</dbReference>
<dbReference type="Proteomes" id="UP000009173">
    <property type="component" value="Chromosome"/>
</dbReference>
<dbReference type="GO" id="GO:0005829">
    <property type="term" value="C:cytosol"/>
    <property type="evidence" value="ECO:0007669"/>
    <property type="project" value="TreeGrafter"/>
</dbReference>
<dbReference type="GO" id="GO:0004107">
    <property type="term" value="F:chorismate synthase activity"/>
    <property type="evidence" value="ECO:0007669"/>
    <property type="project" value="UniProtKB-UniRule"/>
</dbReference>
<dbReference type="GO" id="GO:0010181">
    <property type="term" value="F:FMN binding"/>
    <property type="evidence" value="ECO:0007669"/>
    <property type="project" value="TreeGrafter"/>
</dbReference>
<dbReference type="GO" id="GO:0008652">
    <property type="term" value="P:amino acid biosynthetic process"/>
    <property type="evidence" value="ECO:0007669"/>
    <property type="project" value="UniProtKB-KW"/>
</dbReference>
<dbReference type="GO" id="GO:0009073">
    <property type="term" value="P:aromatic amino acid family biosynthetic process"/>
    <property type="evidence" value="ECO:0007669"/>
    <property type="project" value="UniProtKB-KW"/>
</dbReference>
<dbReference type="GO" id="GO:0009423">
    <property type="term" value="P:chorismate biosynthetic process"/>
    <property type="evidence" value="ECO:0007669"/>
    <property type="project" value="UniProtKB-UniRule"/>
</dbReference>
<dbReference type="CDD" id="cd07304">
    <property type="entry name" value="Chorismate_synthase"/>
    <property type="match status" value="1"/>
</dbReference>
<dbReference type="Gene3D" id="3.60.150.10">
    <property type="entry name" value="Chorismate synthase AroC"/>
    <property type="match status" value="1"/>
</dbReference>
<dbReference type="HAMAP" id="MF_00300">
    <property type="entry name" value="Chorismate_synth"/>
    <property type="match status" value="1"/>
</dbReference>
<dbReference type="InterPro" id="IPR000453">
    <property type="entry name" value="Chorismate_synth"/>
</dbReference>
<dbReference type="InterPro" id="IPR035904">
    <property type="entry name" value="Chorismate_synth_AroC_sf"/>
</dbReference>
<dbReference type="InterPro" id="IPR020541">
    <property type="entry name" value="Chorismate_synthase_CS"/>
</dbReference>
<dbReference type="NCBIfam" id="TIGR00033">
    <property type="entry name" value="aroC"/>
    <property type="match status" value="1"/>
</dbReference>
<dbReference type="NCBIfam" id="NF003793">
    <property type="entry name" value="PRK05382.1"/>
    <property type="match status" value="1"/>
</dbReference>
<dbReference type="PANTHER" id="PTHR21085">
    <property type="entry name" value="CHORISMATE SYNTHASE"/>
    <property type="match status" value="1"/>
</dbReference>
<dbReference type="PANTHER" id="PTHR21085:SF0">
    <property type="entry name" value="CHORISMATE SYNTHASE"/>
    <property type="match status" value="1"/>
</dbReference>
<dbReference type="Pfam" id="PF01264">
    <property type="entry name" value="Chorismate_synt"/>
    <property type="match status" value="1"/>
</dbReference>
<dbReference type="PIRSF" id="PIRSF001456">
    <property type="entry name" value="Chorismate_synth"/>
    <property type="match status" value="1"/>
</dbReference>
<dbReference type="SUPFAM" id="SSF103263">
    <property type="entry name" value="Chorismate synthase, AroC"/>
    <property type="match status" value="1"/>
</dbReference>
<dbReference type="PROSITE" id="PS00787">
    <property type="entry name" value="CHORISMATE_SYNTHASE_1"/>
    <property type="match status" value="1"/>
</dbReference>
<dbReference type="PROSITE" id="PS00788">
    <property type="entry name" value="CHORISMATE_SYNTHASE_2"/>
    <property type="match status" value="1"/>
</dbReference>
<organism>
    <name type="scientific">Nitratidesulfovibrio vulgaris (strain DP4)</name>
    <name type="common">Desulfovibrio vulgaris</name>
    <dbReference type="NCBI Taxonomy" id="391774"/>
    <lineage>
        <taxon>Bacteria</taxon>
        <taxon>Pseudomonadati</taxon>
        <taxon>Thermodesulfobacteriota</taxon>
        <taxon>Desulfovibrionia</taxon>
        <taxon>Desulfovibrionales</taxon>
        <taxon>Desulfovibrionaceae</taxon>
        <taxon>Nitratidesulfovibrio</taxon>
    </lineage>
</organism>